<protein>
    <recommendedName>
        <fullName evidence="4">Cysteine/O-acetylserine efflux protein</fullName>
    </recommendedName>
</protein>
<evidence type="ECO:0000255" key="1"/>
<evidence type="ECO:0000269" key="2">
    <source>
    </source>
</evidence>
<evidence type="ECO:0000269" key="3">
    <source>
    </source>
</evidence>
<evidence type="ECO:0000305" key="4"/>
<proteinExistence type="evidence at protein level"/>
<keyword id="KW-0029">Amino-acid transport</keyword>
<keyword id="KW-0997">Cell inner membrane</keyword>
<keyword id="KW-1003">Cell membrane</keyword>
<keyword id="KW-0472">Membrane</keyword>
<keyword id="KW-1185">Reference proteome</keyword>
<keyword id="KW-0812">Transmembrane</keyword>
<keyword id="KW-1133">Transmembrane helix</keyword>
<keyword id="KW-0813">Transport</keyword>
<feature type="chain" id="PRO_0000094743" description="Cysteine/O-acetylserine efflux protein">
    <location>
        <begin position="1"/>
        <end position="195"/>
    </location>
</feature>
<feature type="topological domain" description="Periplasmic" evidence="4">
    <location>
        <begin position="1"/>
        <end position="7"/>
    </location>
</feature>
<feature type="transmembrane region" description="Helical" evidence="1">
    <location>
        <begin position="8"/>
        <end position="28"/>
    </location>
</feature>
<feature type="topological domain" description="Cytoplasmic" evidence="4">
    <location>
        <begin position="29"/>
        <end position="46"/>
    </location>
</feature>
<feature type="transmembrane region" description="Helical" evidence="1">
    <location>
        <begin position="47"/>
        <end position="67"/>
    </location>
</feature>
<feature type="topological domain" description="Periplasmic" evidence="4">
    <location>
        <begin position="68"/>
        <end position="69"/>
    </location>
</feature>
<feature type="transmembrane region" description="Helical" evidence="1">
    <location>
        <begin position="70"/>
        <end position="90"/>
    </location>
</feature>
<feature type="topological domain" description="Cytoplasmic" evidence="4">
    <location>
        <begin position="91"/>
        <end position="104"/>
    </location>
</feature>
<feature type="transmembrane region" description="Helical" evidence="1">
    <location>
        <begin position="105"/>
        <end position="125"/>
    </location>
</feature>
<feature type="topological domain" description="Periplasmic" evidence="4">
    <location>
        <begin position="126"/>
        <end position="141"/>
    </location>
</feature>
<feature type="transmembrane region" description="Helical" evidence="1">
    <location>
        <begin position="142"/>
        <end position="162"/>
    </location>
</feature>
<feature type="topological domain" description="Cytoplasmic" evidence="4">
    <location>
        <begin position="163"/>
        <end position="176"/>
    </location>
</feature>
<feature type="transmembrane region" description="Helical" evidence="1">
    <location>
        <begin position="177"/>
        <end position="194"/>
    </location>
</feature>
<feature type="topological domain" description="Periplasmic" evidence="3">
    <location>
        <position position="195"/>
    </location>
</feature>
<comment type="function">
    <text evidence="2">Exporter of O-acetylserine (OAS) and cysteine.</text>
</comment>
<comment type="catalytic activity">
    <reaction evidence="2">
        <text>O-acetyl-L-serine(in) = O-acetyl-L-serine(out)</text>
        <dbReference type="Rhea" id="RHEA:29659"/>
        <dbReference type="ChEBI" id="CHEBI:58340"/>
    </reaction>
    <physiologicalReaction direction="left-to-right" evidence="2">
        <dbReference type="Rhea" id="RHEA:29660"/>
    </physiologicalReaction>
</comment>
<comment type="catalytic activity">
    <reaction evidence="2">
        <text>L-cysteine(in) = L-cysteine(out)</text>
        <dbReference type="Rhea" id="RHEA:29655"/>
        <dbReference type="ChEBI" id="CHEBI:35235"/>
    </reaction>
    <physiologicalReaction direction="left-to-right" evidence="2">
        <dbReference type="Rhea" id="RHEA:29656"/>
    </physiologicalReaction>
</comment>
<comment type="subcellular location">
    <subcellularLocation>
        <location evidence="2 3">Cell inner membrane</location>
        <topology evidence="1">Multi-pass membrane protein</topology>
    </subcellularLocation>
</comment>
<comment type="similarity">
    <text evidence="4">Belongs to the Rht family.</text>
</comment>
<reference key="1">
    <citation type="book" date="1993" name="The translational apparatus">
        <title>Non-ribosomal proteins affecting the assembly of ribosomes in Escherichia coli.</title>
        <editorList>
            <person name="Nierhaus K.H."/>
        </editorList>
        <authorList>
            <person name="Nashimoto H."/>
        </authorList>
    </citation>
    <scope>NUCLEOTIDE SEQUENCE [GENOMIC DNA]</scope>
    <source>
        <strain>K12</strain>
    </source>
</reference>
<reference key="2">
    <citation type="submission" date="1995-09" db="EMBL/GenBank/DDBJ databases">
        <authorList>
            <person name="Nashimoto H."/>
            <person name="Saito N."/>
        </authorList>
    </citation>
    <scope>NUCLEOTIDE SEQUENCE [GENOMIC DNA]</scope>
    <source>
        <strain>K12</strain>
    </source>
</reference>
<reference key="3">
    <citation type="journal article" date="1997" name="DNA Res.">
        <title>Construction of a contiguous 874-kb sequence of the Escherichia coli-K12 genome corresponding to 50.0-68.8 min on the linkage map and analysis of its sequence features.</title>
        <authorList>
            <person name="Yamamoto Y."/>
            <person name="Aiba H."/>
            <person name="Baba T."/>
            <person name="Hayashi K."/>
            <person name="Inada T."/>
            <person name="Isono K."/>
            <person name="Itoh T."/>
            <person name="Kimura S."/>
            <person name="Kitagawa M."/>
            <person name="Makino K."/>
            <person name="Miki T."/>
            <person name="Mitsuhashi N."/>
            <person name="Mizobuchi K."/>
            <person name="Mori H."/>
            <person name="Nakade S."/>
            <person name="Nakamura Y."/>
            <person name="Nashimoto H."/>
            <person name="Oshima T."/>
            <person name="Oyama S."/>
            <person name="Saito N."/>
            <person name="Sampei G."/>
            <person name="Satoh Y."/>
            <person name="Sivasundaram S."/>
            <person name="Tagami H."/>
            <person name="Takahashi H."/>
            <person name="Takeda J."/>
            <person name="Takemoto K."/>
            <person name="Uehara K."/>
            <person name="Wada C."/>
            <person name="Yamagata S."/>
            <person name="Horiuchi T."/>
        </authorList>
    </citation>
    <scope>NUCLEOTIDE SEQUENCE [LARGE SCALE GENOMIC DNA]</scope>
    <source>
        <strain>K12 / W3110 / ATCC 27325 / DSM 5911</strain>
    </source>
</reference>
<reference key="4">
    <citation type="journal article" date="1997" name="Science">
        <title>The complete genome sequence of Escherichia coli K-12.</title>
        <authorList>
            <person name="Blattner F.R."/>
            <person name="Plunkett G. III"/>
            <person name="Bloch C.A."/>
            <person name="Perna N.T."/>
            <person name="Burland V."/>
            <person name="Riley M."/>
            <person name="Collado-Vides J."/>
            <person name="Glasner J.D."/>
            <person name="Rode C.K."/>
            <person name="Mayhew G.F."/>
            <person name="Gregor J."/>
            <person name="Davis N.W."/>
            <person name="Kirkpatrick H.A."/>
            <person name="Goeden M.A."/>
            <person name="Rose D.J."/>
            <person name="Mau B."/>
            <person name="Shao Y."/>
        </authorList>
    </citation>
    <scope>NUCLEOTIDE SEQUENCE [LARGE SCALE GENOMIC DNA]</scope>
    <source>
        <strain>K12 / MG1655 / ATCC 47076</strain>
    </source>
</reference>
<reference key="5">
    <citation type="journal article" date="2006" name="Mol. Syst. Biol.">
        <title>Highly accurate genome sequences of Escherichia coli K-12 strains MG1655 and W3110.</title>
        <authorList>
            <person name="Hayashi K."/>
            <person name="Morooka N."/>
            <person name="Yamamoto Y."/>
            <person name="Fujita K."/>
            <person name="Isono K."/>
            <person name="Choi S."/>
            <person name="Ohtsubo E."/>
            <person name="Baba T."/>
            <person name="Wanner B.L."/>
            <person name="Mori H."/>
            <person name="Horiuchi T."/>
        </authorList>
    </citation>
    <scope>NUCLEOTIDE SEQUENCE [LARGE SCALE GENOMIC DNA]</scope>
    <source>
        <strain>K12 / W3110 / ATCC 27325 / DSM 5911</strain>
    </source>
</reference>
<reference key="6">
    <citation type="journal article" date="2003" name="J. Bacteriol.">
        <title>YfiK from Escherichia coli promotes export of O-acetylserine and cysteine.</title>
        <authorList>
            <person name="Franke I."/>
            <person name="Resch A."/>
            <person name="Dassler T."/>
            <person name="Maier T."/>
            <person name="Boeck A."/>
        </authorList>
    </citation>
    <scope>FUNCTION</scope>
    <scope>CATALYTIC ACTIVITY</scope>
    <scope>SUBCELLULAR LOCATION</scope>
</reference>
<reference key="7">
    <citation type="journal article" date="2005" name="Science">
        <title>Global topology analysis of the Escherichia coli inner membrane proteome.</title>
        <authorList>
            <person name="Daley D.O."/>
            <person name="Rapp M."/>
            <person name="Granseth E."/>
            <person name="Melen K."/>
            <person name="Drew D."/>
            <person name="von Heijne G."/>
        </authorList>
    </citation>
    <scope>TOPOLOGY [LARGE SCALE ANALYSIS]</scope>
    <scope>SUBCELLULAR LOCATION</scope>
    <source>
        <strain>K12 / MG1655 / ATCC 47076</strain>
    </source>
</reference>
<gene>
    <name type="primary">eamB</name>
    <name type="synonym">yfiK</name>
    <name type="ordered locus">b2578</name>
    <name type="ordered locus">JW2562</name>
</gene>
<name>EAMB_ECOLI</name>
<accession>P38101</accession>
<sequence>MTPTLLSAFWTYTLITAMTPGPNNILALSSATSHGFRQSTRVLAGMSLGFLIVMLLCAGISFSLAVIDPAAVHLLSWAGAAYIVWLAWKIATSPTKEDGLQAKPISFWASFALQFVNVKIILYGVTALSTFVLPQTQALSWVVGVSVLLAMIGTFGNVCWALAGHLFQRLFRQYGRQLNIVLALLLVYCAVRIFY</sequence>
<dbReference type="EMBL" id="D13169">
    <property type="status" value="NOT_ANNOTATED_CDS"/>
    <property type="molecule type" value="Genomic_DNA"/>
</dbReference>
<dbReference type="EMBL" id="D64044">
    <property type="status" value="NOT_ANNOTATED_CDS"/>
    <property type="molecule type" value="Genomic_DNA"/>
</dbReference>
<dbReference type="EMBL" id="U00096">
    <property type="protein sequence ID" value="AAC75631.1"/>
    <property type="molecule type" value="Genomic_DNA"/>
</dbReference>
<dbReference type="EMBL" id="AP009048">
    <property type="protein sequence ID" value="BAA16464.1"/>
    <property type="molecule type" value="Genomic_DNA"/>
</dbReference>
<dbReference type="PIR" id="A65036">
    <property type="entry name" value="A65036"/>
</dbReference>
<dbReference type="RefSeq" id="NP_417073.1">
    <property type="nucleotide sequence ID" value="NC_000913.3"/>
</dbReference>
<dbReference type="RefSeq" id="WP_000189207.1">
    <property type="nucleotide sequence ID" value="NZ_LN832404.1"/>
</dbReference>
<dbReference type="BioGRID" id="4261635">
    <property type="interactions" value="13"/>
</dbReference>
<dbReference type="FunCoup" id="P38101">
    <property type="interactions" value="83"/>
</dbReference>
<dbReference type="STRING" id="511145.b2578"/>
<dbReference type="TCDB" id="2.A.76.1.4">
    <property type="family name" value="the resistance to homoserine/threonine (rhtb) family"/>
</dbReference>
<dbReference type="PaxDb" id="511145-b2578"/>
<dbReference type="EnsemblBacteria" id="AAC75631">
    <property type="protein sequence ID" value="AAC75631"/>
    <property type="gene ID" value="b2578"/>
</dbReference>
<dbReference type="GeneID" id="93774508"/>
<dbReference type="GeneID" id="947065"/>
<dbReference type="KEGG" id="ecj:JW2562"/>
<dbReference type="KEGG" id="eco:b2578"/>
<dbReference type="KEGG" id="ecoc:C3026_14285"/>
<dbReference type="PATRIC" id="fig|1411691.4.peg.4156"/>
<dbReference type="EchoBASE" id="EB2339"/>
<dbReference type="eggNOG" id="COG1280">
    <property type="taxonomic scope" value="Bacteria"/>
</dbReference>
<dbReference type="HOGENOM" id="CLU_079569_1_2_6"/>
<dbReference type="InParanoid" id="P38101"/>
<dbReference type="OMA" id="NPKAWIM"/>
<dbReference type="OrthoDB" id="9812084at2"/>
<dbReference type="PhylomeDB" id="P38101"/>
<dbReference type="BioCyc" id="EcoCyc:EG12445-MONOMER"/>
<dbReference type="BioCyc" id="MetaCyc:EG12445-MONOMER"/>
<dbReference type="PRO" id="PR:P38101"/>
<dbReference type="Proteomes" id="UP000000625">
    <property type="component" value="Chromosome"/>
</dbReference>
<dbReference type="GO" id="GO:0005886">
    <property type="term" value="C:plasma membrane"/>
    <property type="evidence" value="ECO:0000314"/>
    <property type="project" value="EcoCyc"/>
</dbReference>
<dbReference type="GO" id="GO:0015171">
    <property type="term" value="F:amino acid transmembrane transporter activity"/>
    <property type="evidence" value="ECO:0000318"/>
    <property type="project" value="GO_Central"/>
</dbReference>
<dbReference type="GO" id="GO:0015562">
    <property type="term" value="F:efflux transmembrane transporter activity"/>
    <property type="evidence" value="ECO:0000315"/>
    <property type="project" value="EcoCyc"/>
</dbReference>
<dbReference type="GO" id="GO:0033228">
    <property type="term" value="P:cysteine export across plasma membrane"/>
    <property type="evidence" value="ECO:0000315"/>
    <property type="project" value="EcoCyc"/>
</dbReference>
<dbReference type="InterPro" id="IPR001123">
    <property type="entry name" value="LeuE-type"/>
</dbReference>
<dbReference type="NCBIfam" id="NF007653">
    <property type="entry name" value="PRK10323.1"/>
    <property type="match status" value="1"/>
</dbReference>
<dbReference type="PANTHER" id="PTHR30086">
    <property type="entry name" value="ARGININE EXPORTER PROTEIN ARGO"/>
    <property type="match status" value="1"/>
</dbReference>
<dbReference type="PANTHER" id="PTHR30086:SF20">
    <property type="entry name" value="ARGININE EXPORTER PROTEIN ARGO-RELATED"/>
    <property type="match status" value="1"/>
</dbReference>
<dbReference type="Pfam" id="PF01810">
    <property type="entry name" value="LysE"/>
    <property type="match status" value="1"/>
</dbReference>
<organism>
    <name type="scientific">Escherichia coli (strain K12)</name>
    <dbReference type="NCBI Taxonomy" id="83333"/>
    <lineage>
        <taxon>Bacteria</taxon>
        <taxon>Pseudomonadati</taxon>
        <taxon>Pseudomonadota</taxon>
        <taxon>Gammaproteobacteria</taxon>
        <taxon>Enterobacterales</taxon>
        <taxon>Enterobacteriaceae</taxon>
        <taxon>Escherichia</taxon>
    </lineage>
</organism>